<reference key="1">
    <citation type="journal article" date="2006" name="Proc. Natl. Acad. Sci. U.S.A.">
        <title>Comparative genomics of the lactic acid bacteria.</title>
        <authorList>
            <person name="Makarova K.S."/>
            <person name="Slesarev A."/>
            <person name="Wolf Y.I."/>
            <person name="Sorokin A."/>
            <person name="Mirkin B."/>
            <person name="Koonin E.V."/>
            <person name="Pavlov A."/>
            <person name="Pavlova N."/>
            <person name="Karamychev V."/>
            <person name="Polouchine N."/>
            <person name="Shakhova V."/>
            <person name="Grigoriev I."/>
            <person name="Lou Y."/>
            <person name="Rohksar D."/>
            <person name="Lucas S."/>
            <person name="Huang K."/>
            <person name="Goodstein D.M."/>
            <person name="Hawkins T."/>
            <person name="Plengvidhya V."/>
            <person name="Welker D."/>
            <person name="Hughes J."/>
            <person name="Goh Y."/>
            <person name="Benson A."/>
            <person name="Baldwin K."/>
            <person name="Lee J.-H."/>
            <person name="Diaz-Muniz I."/>
            <person name="Dosti B."/>
            <person name="Smeianov V."/>
            <person name="Wechter W."/>
            <person name="Barabote R."/>
            <person name="Lorca G."/>
            <person name="Altermann E."/>
            <person name="Barrangou R."/>
            <person name="Ganesan B."/>
            <person name="Xie Y."/>
            <person name="Rawsthorne H."/>
            <person name="Tamir D."/>
            <person name="Parker C."/>
            <person name="Breidt F."/>
            <person name="Broadbent J.R."/>
            <person name="Hutkins R."/>
            <person name="O'Sullivan D."/>
            <person name="Steele J."/>
            <person name="Unlu G."/>
            <person name="Saier M.H. Jr."/>
            <person name="Klaenhammer T."/>
            <person name="Richardson P."/>
            <person name="Kozyavkin S."/>
            <person name="Weimer B.C."/>
            <person name="Mills D.A."/>
        </authorList>
    </citation>
    <scope>NUCLEOTIDE SEQUENCE [LARGE SCALE GENOMIC DNA]</scope>
    <source>
        <strain>ATCC 8293 / DSM 20343 / BCRC 11652 / CCM 1803 / JCM 6124 / NCDO 523 / NBRC 100496 / NCIMB 8023 / NCTC 12954 / NRRL B-1118 / 37Y</strain>
    </source>
</reference>
<evidence type="ECO:0000255" key="1">
    <source>
        <dbReference type="HAMAP-Rule" id="MF_01219"/>
    </source>
</evidence>
<organism>
    <name type="scientific">Leuconostoc mesenteroides subsp. mesenteroides (strain ATCC 8293 / DSM 20343 / BCRC 11652 / CCM 1803 / JCM 6124 / NCDO 523 / NBRC 100496 / NCIMB 8023 / NCTC 12954 / NRRL B-1118 / 37Y)</name>
    <dbReference type="NCBI Taxonomy" id="203120"/>
    <lineage>
        <taxon>Bacteria</taxon>
        <taxon>Bacillati</taxon>
        <taxon>Bacillota</taxon>
        <taxon>Bacilli</taxon>
        <taxon>Lactobacillales</taxon>
        <taxon>Lactobacillaceae</taxon>
        <taxon>Leuconostoc</taxon>
    </lineage>
</organism>
<sequence>MPNKEVLDNASLQRALTRITYEIIERNKGGKNLVLVGIKTRGEYLARRIADRLEQLEGVQIPVMAIDITNFRDDKPDQHNDLGLNSEERLNISEQNIVLIDDVLFTGRTIRAALDALIHIGRPKTISLAVLVDRGHRELPIRADFVGKNIPTAQNEKIKVFVQEIDGKDAVEIVH</sequence>
<accession>Q03WF7</accession>
<gene>
    <name evidence="1" type="primary">pyrR</name>
    <name type="ordered locus">LEUM_1372</name>
</gene>
<proteinExistence type="inferred from homology"/>
<comment type="function">
    <text evidence="1">Regulates transcriptional attenuation of the pyrimidine nucleotide (pyr) operon by binding in a uridine-dependent manner to specific sites on pyr mRNA. This disrupts an antiterminator hairpin in the RNA and favors formation of a downstream transcription terminator, leading to a reduced expression of downstream genes.</text>
</comment>
<comment type="function">
    <text evidence="1">Also displays a weak uracil phosphoribosyltransferase activity which is not physiologically significant.</text>
</comment>
<comment type="catalytic activity">
    <reaction evidence="1">
        <text>UMP + diphosphate = 5-phospho-alpha-D-ribose 1-diphosphate + uracil</text>
        <dbReference type="Rhea" id="RHEA:13017"/>
        <dbReference type="ChEBI" id="CHEBI:17568"/>
        <dbReference type="ChEBI" id="CHEBI:33019"/>
        <dbReference type="ChEBI" id="CHEBI:57865"/>
        <dbReference type="ChEBI" id="CHEBI:58017"/>
        <dbReference type="EC" id="2.4.2.9"/>
    </reaction>
</comment>
<comment type="subunit">
    <text evidence="1">Homodimer and homohexamer; in equilibrium.</text>
</comment>
<comment type="similarity">
    <text evidence="1">Belongs to the purine/pyrimidine phosphoribosyltransferase family. PyrR subfamily.</text>
</comment>
<protein>
    <recommendedName>
        <fullName evidence="1">Bifunctional protein PyrR</fullName>
    </recommendedName>
    <domain>
        <recommendedName>
            <fullName evidence="1">Pyrimidine operon regulatory protein</fullName>
        </recommendedName>
    </domain>
    <domain>
        <recommendedName>
            <fullName evidence="1">Uracil phosphoribosyltransferase</fullName>
            <shortName evidence="1">UPRTase</shortName>
            <ecNumber evidence="1">2.4.2.9</ecNumber>
        </recommendedName>
    </domain>
</protein>
<keyword id="KW-0328">Glycosyltransferase</keyword>
<keyword id="KW-1185">Reference proteome</keyword>
<keyword id="KW-0694">RNA-binding</keyword>
<keyword id="KW-0804">Transcription</keyword>
<keyword id="KW-0805">Transcription regulation</keyword>
<keyword id="KW-0806">Transcription termination</keyword>
<keyword id="KW-0808">Transferase</keyword>
<dbReference type="EC" id="2.4.2.9" evidence="1"/>
<dbReference type="EMBL" id="CP000414">
    <property type="protein sequence ID" value="ABJ62465.1"/>
    <property type="molecule type" value="Genomic_DNA"/>
</dbReference>
<dbReference type="RefSeq" id="WP_011680067.1">
    <property type="nucleotide sequence ID" value="NC_008531.1"/>
</dbReference>
<dbReference type="SMR" id="Q03WF7"/>
<dbReference type="EnsemblBacteria" id="ABJ62465">
    <property type="protein sequence ID" value="ABJ62465"/>
    <property type="gene ID" value="LEUM_1372"/>
</dbReference>
<dbReference type="GeneID" id="97503656"/>
<dbReference type="KEGG" id="lme:LEUM_1372"/>
<dbReference type="eggNOG" id="COG2065">
    <property type="taxonomic scope" value="Bacteria"/>
</dbReference>
<dbReference type="HOGENOM" id="CLU_094234_2_1_9"/>
<dbReference type="Proteomes" id="UP000000362">
    <property type="component" value="Chromosome"/>
</dbReference>
<dbReference type="GO" id="GO:0003723">
    <property type="term" value="F:RNA binding"/>
    <property type="evidence" value="ECO:0007669"/>
    <property type="project" value="UniProtKB-UniRule"/>
</dbReference>
<dbReference type="GO" id="GO:0004845">
    <property type="term" value="F:uracil phosphoribosyltransferase activity"/>
    <property type="evidence" value="ECO:0007669"/>
    <property type="project" value="UniProtKB-UniRule"/>
</dbReference>
<dbReference type="GO" id="GO:0006353">
    <property type="term" value="P:DNA-templated transcription termination"/>
    <property type="evidence" value="ECO:0007669"/>
    <property type="project" value="UniProtKB-UniRule"/>
</dbReference>
<dbReference type="CDD" id="cd06223">
    <property type="entry name" value="PRTases_typeI"/>
    <property type="match status" value="1"/>
</dbReference>
<dbReference type="FunFam" id="3.40.50.2020:FF:000020">
    <property type="entry name" value="Bifunctional protein PyrR"/>
    <property type="match status" value="1"/>
</dbReference>
<dbReference type="Gene3D" id="3.40.50.2020">
    <property type="match status" value="1"/>
</dbReference>
<dbReference type="HAMAP" id="MF_01219">
    <property type="entry name" value="PyrR"/>
    <property type="match status" value="1"/>
</dbReference>
<dbReference type="InterPro" id="IPR000836">
    <property type="entry name" value="PRibTrfase_dom"/>
</dbReference>
<dbReference type="InterPro" id="IPR029057">
    <property type="entry name" value="PRTase-like"/>
</dbReference>
<dbReference type="InterPro" id="IPR023050">
    <property type="entry name" value="PyrR"/>
</dbReference>
<dbReference type="InterPro" id="IPR050137">
    <property type="entry name" value="PyrR_bifunctional"/>
</dbReference>
<dbReference type="NCBIfam" id="NF003548">
    <property type="entry name" value="PRK05205.1-4"/>
    <property type="match status" value="1"/>
</dbReference>
<dbReference type="NCBIfam" id="NF003549">
    <property type="entry name" value="PRK05205.1-5"/>
    <property type="match status" value="1"/>
</dbReference>
<dbReference type="PANTHER" id="PTHR11608">
    <property type="entry name" value="BIFUNCTIONAL PROTEIN PYRR"/>
    <property type="match status" value="1"/>
</dbReference>
<dbReference type="PANTHER" id="PTHR11608:SF0">
    <property type="entry name" value="BIFUNCTIONAL PROTEIN PYRR"/>
    <property type="match status" value="1"/>
</dbReference>
<dbReference type="Pfam" id="PF00156">
    <property type="entry name" value="Pribosyltran"/>
    <property type="match status" value="1"/>
</dbReference>
<dbReference type="SUPFAM" id="SSF53271">
    <property type="entry name" value="PRTase-like"/>
    <property type="match status" value="1"/>
</dbReference>
<feature type="chain" id="PRO_1000053844" description="Bifunctional protein PyrR">
    <location>
        <begin position="1"/>
        <end position="175"/>
    </location>
</feature>
<feature type="short sequence motif" description="PRPP-binding" evidence="1">
    <location>
        <begin position="97"/>
        <end position="109"/>
    </location>
</feature>
<name>PYRR_LEUMM</name>